<proteinExistence type="evidence at protein level"/>
<comment type="subunit">
    <text evidence="2">Component of the mitochondrial ribosome large subunit (39S) which comprises a 16S rRNA and about 50 distinct proteins.</text>
</comment>
<comment type="subcellular location">
    <subcellularLocation>
        <location evidence="2 3">Mitochondrion</location>
    </subcellularLocation>
</comment>
<comment type="similarity">
    <text evidence="4">Belongs to the bacterial ribosomal protein bL34 family.</text>
</comment>
<gene>
    <name type="primary">MRPL34</name>
</gene>
<evidence type="ECO:0000250" key="1">
    <source>
        <dbReference type="UniProtKB" id="Q9BQ48"/>
    </source>
</evidence>
<evidence type="ECO:0000269" key="2">
    <source>
    </source>
</evidence>
<evidence type="ECO:0000269" key="3">
    <source>
    </source>
</evidence>
<evidence type="ECO:0000305" key="4"/>
<organism>
    <name type="scientific">Bos taurus</name>
    <name type="common">Bovine</name>
    <dbReference type="NCBI Taxonomy" id="9913"/>
    <lineage>
        <taxon>Eukaryota</taxon>
        <taxon>Metazoa</taxon>
        <taxon>Chordata</taxon>
        <taxon>Craniata</taxon>
        <taxon>Vertebrata</taxon>
        <taxon>Euteleostomi</taxon>
        <taxon>Mammalia</taxon>
        <taxon>Eutheria</taxon>
        <taxon>Laurasiatheria</taxon>
        <taxon>Artiodactyla</taxon>
        <taxon>Ruminantia</taxon>
        <taxon>Pecora</taxon>
        <taxon>Bovidae</taxon>
        <taxon>Bovinae</taxon>
        <taxon>Bos</taxon>
    </lineage>
</organism>
<accession>A8NN94</accession>
<name>RM34_BOVIN</name>
<feature type="transit peptide" description="Mitochondrion" evidence="2">
    <location>
        <begin position="1"/>
        <end position="50"/>
    </location>
</feature>
<feature type="chain" id="PRO_0000344506" description="Large ribosomal subunit protein bL34m">
    <location>
        <begin position="51"/>
        <end position="96"/>
    </location>
</feature>
<feature type="modified residue" description="Phosphoserine" evidence="1">
    <location>
        <position position="75"/>
    </location>
</feature>
<keyword id="KW-0002">3D-structure</keyword>
<keyword id="KW-0903">Direct protein sequencing</keyword>
<keyword id="KW-0496">Mitochondrion</keyword>
<keyword id="KW-0597">Phosphoprotein</keyword>
<keyword id="KW-1185">Reference proteome</keyword>
<keyword id="KW-0687">Ribonucleoprotein</keyword>
<keyword id="KW-0689">Ribosomal protein</keyword>
<keyword id="KW-0809">Transit peptide</keyword>
<reference key="1">
    <citation type="submission" date="2005-11" db="EMBL/GenBank/DDBJ databases">
        <authorList>
            <consortium name="NIH - Mammalian Gene Collection (MGC) project"/>
        </authorList>
    </citation>
    <scope>NUCLEOTIDE SEQUENCE [LARGE SCALE MRNA]</scope>
    <source>
        <strain>Crossbred X Angus</strain>
        <tissue>Liver</tissue>
    </source>
</reference>
<reference key="2">
    <citation type="journal article" date="2001" name="J. Biol. Chem.">
        <title>Structural compensation for the deficit of rRNA with proteins in the mammalian mitochondrial ribosome. Systematic analysis of protein components of the large ribosomal subunit from mammalian mitochondria.</title>
        <authorList>
            <person name="Suzuki T."/>
            <person name="Terasaki M."/>
            <person name="Takemoto-Hori C."/>
            <person name="Hanada T."/>
            <person name="Ueda T."/>
            <person name="Wada A."/>
            <person name="Watanabe K."/>
        </authorList>
    </citation>
    <scope>PROTEIN SEQUENCE OF 51-70</scope>
    <scope>IDENTIFICATION BY MASS SPECTROMETRY</scope>
    <scope>SUBCELLULAR LOCATION</scope>
    <scope>SUBUNIT</scope>
</reference>
<reference key="3">
    <citation type="journal article" date="2006" name="J. Mol. Biol.">
        <title>A structural model for the large subunit of the mammalian mitochondrial ribosome.</title>
        <authorList>
            <person name="Mears J.A."/>
            <person name="Sharma M.R."/>
            <person name="Gutell R.R."/>
            <person name="McCook A.S."/>
            <person name="Richardson P.E."/>
            <person name="Caulfield T.R."/>
            <person name="Agrawal R.K."/>
            <person name="Harvey S.C."/>
        </authorList>
    </citation>
    <scope>STRUCTURE BY ELECTRON MICROSCOPY (12 ANGSTROMS)</scope>
    <scope>SUBCELLULAR LOCATION</scope>
</reference>
<protein>
    <recommendedName>
        <fullName evidence="4">Large ribosomal subunit protein bL34m</fullName>
    </recommendedName>
    <alternativeName>
        <fullName>39S ribosomal protein L34, mitochondrial</fullName>
        <shortName>L34mt</shortName>
        <shortName>MRP-L34</shortName>
    </alternativeName>
</protein>
<dbReference type="EMBL" id="BC110163">
    <property type="protein sequence ID" value="AAI10164.1"/>
    <property type="molecule type" value="mRNA"/>
</dbReference>
<dbReference type="RefSeq" id="NP_001103657.1">
    <property type="nucleotide sequence ID" value="NM_001110187.2"/>
</dbReference>
<dbReference type="PDB" id="2FTC">
    <property type="method" value="EM"/>
    <property type="chains" value="Q=57-94"/>
</dbReference>
<dbReference type="PDBsum" id="2FTC"/>
<dbReference type="SMR" id="A8NN94"/>
<dbReference type="FunCoup" id="A8NN94">
    <property type="interactions" value="907"/>
</dbReference>
<dbReference type="STRING" id="9913.ENSBTAP00000019403"/>
<dbReference type="PaxDb" id="9913-ENSBTAP00000019403"/>
<dbReference type="GeneID" id="786454"/>
<dbReference type="KEGG" id="bta:786454"/>
<dbReference type="CTD" id="64981"/>
<dbReference type="VEuPathDB" id="HostDB:ENSBTAG00000014579"/>
<dbReference type="eggNOG" id="KOG4612">
    <property type="taxonomic scope" value="Eukaryota"/>
</dbReference>
<dbReference type="HOGENOM" id="CLU_2372198_0_0_1"/>
<dbReference type="InParanoid" id="A8NN94"/>
<dbReference type="OMA" id="LQPRVWM"/>
<dbReference type="OrthoDB" id="431691at2759"/>
<dbReference type="TreeFam" id="TF324478"/>
<dbReference type="Reactome" id="R-BTA-5389840">
    <property type="pathway name" value="Mitochondrial translation elongation"/>
</dbReference>
<dbReference type="Reactome" id="R-BTA-5419276">
    <property type="pathway name" value="Mitochondrial translation termination"/>
</dbReference>
<dbReference type="EvolutionaryTrace" id="A8NN94"/>
<dbReference type="Proteomes" id="UP000009136">
    <property type="component" value="Chromosome 7"/>
</dbReference>
<dbReference type="Bgee" id="ENSBTAG00000014579">
    <property type="expression patterns" value="Expressed in tongue muscle and 105 other cell types or tissues"/>
</dbReference>
<dbReference type="GO" id="GO:0005743">
    <property type="term" value="C:mitochondrial inner membrane"/>
    <property type="evidence" value="ECO:0000304"/>
    <property type="project" value="Reactome"/>
</dbReference>
<dbReference type="GO" id="GO:0005762">
    <property type="term" value="C:mitochondrial large ribosomal subunit"/>
    <property type="evidence" value="ECO:0000250"/>
    <property type="project" value="UniProtKB"/>
</dbReference>
<dbReference type="GO" id="GO:0003735">
    <property type="term" value="F:structural constituent of ribosome"/>
    <property type="evidence" value="ECO:0007669"/>
    <property type="project" value="InterPro"/>
</dbReference>
<dbReference type="GO" id="GO:0006412">
    <property type="term" value="P:translation"/>
    <property type="evidence" value="ECO:0007669"/>
    <property type="project" value="InterPro"/>
</dbReference>
<dbReference type="FunFam" id="1.10.287.3980:FF:000001">
    <property type="entry name" value="Mitochondrial ribosomal protein L34"/>
    <property type="match status" value="1"/>
</dbReference>
<dbReference type="Gene3D" id="1.10.287.3980">
    <property type="match status" value="1"/>
</dbReference>
<dbReference type="InterPro" id="IPR000271">
    <property type="entry name" value="Ribosomal_bL34"/>
</dbReference>
<dbReference type="NCBIfam" id="TIGR01030">
    <property type="entry name" value="rpmH_bact"/>
    <property type="match status" value="1"/>
</dbReference>
<dbReference type="PANTHER" id="PTHR14503:SF4">
    <property type="entry name" value="LARGE RIBOSOMAL SUBUNIT PROTEIN BL34M"/>
    <property type="match status" value="1"/>
</dbReference>
<dbReference type="PANTHER" id="PTHR14503">
    <property type="entry name" value="MITOCHONDRIAL RIBOSOMAL PROTEIN 34 FAMILY MEMBER"/>
    <property type="match status" value="1"/>
</dbReference>
<dbReference type="Pfam" id="PF00468">
    <property type="entry name" value="Ribosomal_L34"/>
    <property type="match status" value="1"/>
</dbReference>
<sequence>MAFSVGSVGCLLGPVSRSAGLLGGRWLQGSRAWLGLPDTRRLPVIQQTRGRTRGNEYQPSNIKRKNKHGWIRRLSTPNGVQVILRRMHKGRKSLSH</sequence>